<gene>
    <name evidence="1" type="primary">fmt</name>
    <name type="ordered locus">Pnec_1777</name>
</gene>
<reference key="1">
    <citation type="journal article" date="2013" name="Proc. Natl. Acad. Sci. U.S.A.">
        <title>Polynucleobacter necessarius, a model for genome reduction in both free-living and symbiotic bacteria.</title>
        <authorList>
            <person name="Boscaro V."/>
            <person name="Felletti M."/>
            <person name="Vannini C."/>
            <person name="Ackerman M.S."/>
            <person name="Chain P.S."/>
            <person name="Malfatti S."/>
            <person name="Vergez L.M."/>
            <person name="Shin M."/>
            <person name="Doak T.G."/>
            <person name="Lynch M."/>
            <person name="Petroni G."/>
        </authorList>
    </citation>
    <scope>NUCLEOTIDE SEQUENCE [LARGE SCALE GENOMIC DNA]</scope>
    <source>
        <strain>STIR1</strain>
    </source>
</reference>
<evidence type="ECO:0000255" key="1">
    <source>
        <dbReference type="HAMAP-Rule" id="MF_00182"/>
    </source>
</evidence>
<proteinExistence type="inferred from homology"/>
<name>FMT_POLNS</name>
<organism>
    <name type="scientific">Polynucleobacter necessarius subsp. necessarius (strain STIR1)</name>
    <dbReference type="NCBI Taxonomy" id="452638"/>
    <lineage>
        <taxon>Bacteria</taxon>
        <taxon>Pseudomonadati</taxon>
        <taxon>Pseudomonadota</taxon>
        <taxon>Betaproteobacteria</taxon>
        <taxon>Burkholderiales</taxon>
        <taxon>Burkholderiaceae</taxon>
        <taxon>Polynucleobacter</taxon>
    </lineage>
</organism>
<sequence length="332" mass="35891">MKIVFAGTPEFAAQAVRAIHAAGHEIVLAFTQPDRRAGRGMHLQASPVKEFALQKNIPILQPETLRRTSADPQKKAQAEEAYKSLSAIEFDAMVVVAYGLILPQEILDITEKPGRHGSFNIHASLLPRWRGAAPIQRAIEAGDAKTGVCIMQMDAGLDTGDTVLVVELDIARDETSASLHDRLAGLGADLIVNALDVLQQGKTMIRSPQAIKGITYAEKILKSEAEIDWTLSAQEIDQRIRAFNPFPGASSKLNGYAIKLWNSRLADSQAFSMVGGAGDVLEFGRDGAYIQCGEGVLEVLEMQKPGGKKMAAKACIQPIGAGEKLLHFQLKE</sequence>
<comment type="function">
    <text evidence="1">Attaches a formyl group to the free amino group of methionyl-tRNA(fMet). The formyl group appears to play a dual role in the initiator identity of N-formylmethionyl-tRNA by promoting its recognition by IF2 and preventing the misappropriation of this tRNA by the elongation apparatus.</text>
</comment>
<comment type="catalytic activity">
    <reaction evidence="1">
        <text>L-methionyl-tRNA(fMet) + (6R)-10-formyltetrahydrofolate = N-formyl-L-methionyl-tRNA(fMet) + (6S)-5,6,7,8-tetrahydrofolate + H(+)</text>
        <dbReference type="Rhea" id="RHEA:24380"/>
        <dbReference type="Rhea" id="RHEA-COMP:9952"/>
        <dbReference type="Rhea" id="RHEA-COMP:9953"/>
        <dbReference type="ChEBI" id="CHEBI:15378"/>
        <dbReference type="ChEBI" id="CHEBI:57453"/>
        <dbReference type="ChEBI" id="CHEBI:78530"/>
        <dbReference type="ChEBI" id="CHEBI:78844"/>
        <dbReference type="ChEBI" id="CHEBI:195366"/>
        <dbReference type="EC" id="2.1.2.9"/>
    </reaction>
</comment>
<comment type="similarity">
    <text evidence="1">Belongs to the Fmt family.</text>
</comment>
<dbReference type="EC" id="2.1.2.9" evidence="1"/>
<dbReference type="EMBL" id="CP001010">
    <property type="protein sequence ID" value="ACB44830.1"/>
    <property type="molecule type" value="Genomic_DNA"/>
</dbReference>
<dbReference type="SMR" id="B1XSN1"/>
<dbReference type="STRING" id="452638.Pnec_1777"/>
<dbReference type="KEGG" id="pne:Pnec_1777"/>
<dbReference type="eggNOG" id="COG0223">
    <property type="taxonomic scope" value="Bacteria"/>
</dbReference>
<dbReference type="HOGENOM" id="CLU_033347_1_2_4"/>
<dbReference type="OrthoDB" id="9802815at2"/>
<dbReference type="GO" id="GO:0005829">
    <property type="term" value="C:cytosol"/>
    <property type="evidence" value="ECO:0007669"/>
    <property type="project" value="TreeGrafter"/>
</dbReference>
<dbReference type="GO" id="GO:0004479">
    <property type="term" value="F:methionyl-tRNA formyltransferase activity"/>
    <property type="evidence" value="ECO:0007669"/>
    <property type="project" value="UniProtKB-UniRule"/>
</dbReference>
<dbReference type="CDD" id="cd08646">
    <property type="entry name" value="FMT_core_Met-tRNA-FMT_N"/>
    <property type="match status" value="1"/>
</dbReference>
<dbReference type="CDD" id="cd08704">
    <property type="entry name" value="Met_tRNA_FMT_C"/>
    <property type="match status" value="1"/>
</dbReference>
<dbReference type="Gene3D" id="3.10.25.10">
    <property type="entry name" value="Formyl transferase, C-terminal domain"/>
    <property type="match status" value="1"/>
</dbReference>
<dbReference type="Gene3D" id="3.40.50.170">
    <property type="entry name" value="Formyl transferase, N-terminal domain"/>
    <property type="match status" value="1"/>
</dbReference>
<dbReference type="HAMAP" id="MF_00182">
    <property type="entry name" value="Formyl_trans"/>
    <property type="match status" value="1"/>
</dbReference>
<dbReference type="InterPro" id="IPR005794">
    <property type="entry name" value="Fmt"/>
</dbReference>
<dbReference type="InterPro" id="IPR005793">
    <property type="entry name" value="Formyl_trans_C"/>
</dbReference>
<dbReference type="InterPro" id="IPR037022">
    <property type="entry name" value="Formyl_trans_C_sf"/>
</dbReference>
<dbReference type="InterPro" id="IPR002376">
    <property type="entry name" value="Formyl_transf_N"/>
</dbReference>
<dbReference type="InterPro" id="IPR036477">
    <property type="entry name" value="Formyl_transf_N_sf"/>
</dbReference>
<dbReference type="InterPro" id="IPR011034">
    <property type="entry name" value="Formyl_transferase-like_C_sf"/>
</dbReference>
<dbReference type="InterPro" id="IPR001555">
    <property type="entry name" value="GART_AS"/>
</dbReference>
<dbReference type="InterPro" id="IPR044135">
    <property type="entry name" value="Met-tRNA-FMT_C"/>
</dbReference>
<dbReference type="InterPro" id="IPR041711">
    <property type="entry name" value="Met-tRNA-FMT_N"/>
</dbReference>
<dbReference type="NCBIfam" id="TIGR00460">
    <property type="entry name" value="fmt"/>
    <property type="match status" value="1"/>
</dbReference>
<dbReference type="PANTHER" id="PTHR11138">
    <property type="entry name" value="METHIONYL-TRNA FORMYLTRANSFERASE"/>
    <property type="match status" value="1"/>
</dbReference>
<dbReference type="PANTHER" id="PTHR11138:SF5">
    <property type="entry name" value="METHIONYL-TRNA FORMYLTRANSFERASE, MITOCHONDRIAL"/>
    <property type="match status" value="1"/>
</dbReference>
<dbReference type="Pfam" id="PF02911">
    <property type="entry name" value="Formyl_trans_C"/>
    <property type="match status" value="1"/>
</dbReference>
<dbReference type="Pfam" id="PF00551">
    <property type="entry name" value="Formyl_trans_N"/>
    <property type="match status" value="1"/>
</dbReference>
<dbReference type="SUPFAM" id="SSF50486">
    <property type="entry name" value="FMT C-terminal domain-like"/>
    <property type="match status" value="1"/>
</dbReference>
<dbReference type="SUPFAM" id="SSF53328">
    <property type="entry name" value="Formyltransferase"/>
    <property type="match status" value="1"/>
</dbReference>
<dbReference type="PROSITE" id="PS00373">
    <property type="entry name" value="GART"/>
    <property type="match status" value="1"/>
</dbReference>
<keyword id="KW-0648">Protein biosynthesis</keyword>
<keyword id="KW-0808">Transferase</keyword>
<feature type="chain" id="PRO_1000098425" description="Methionyl-tRNA formyltransferase">
    <location>
        <begin position="1"/>
        <end position="332"/>
    </location>
</feature>
<feature type="binding site" evidence="1">
    <location>
        <begin position="124"/>
        <end position="127"/>
    </location>
    <ligand>
        <name>(6S)-5,6,7,8-tetrahydrofolate</name>
        <dbReference type="ChEBI" id="CHEBI:57453"/>
    </ligand>
</feature>
<protein>
    <recommendedName>
        <fullName evidence="1">Methionyl-tRNA formyltransferase</fullName>
        <ecNumber evidence="1">2.1.2.9</ecNumber>
    </recommendedName>
</protein>
<accession>B1XSN1</accession>